<protein>
    <recommendedName>
        <fullName evidence="1">Large ribosomal subunit protein uL14</fullName>
    </recommendedName>
    <alternativeName>
        <fullName evidence="2">50S ribosomal protein L14</fullName>
    </alternativeName>
</protein>
<organism>
    <name type="scientific">Chlamydia abortus (strain DSM 27085 / S26/3)</name>
    <name type="common">Chlamydophila abortus</name>
    <dbReference type="NCBI Taxonomy" id="218497"/>
    <lineage>
        <taxon>Bacteria</taxon>
        <taxon>Pseudomonadati</taxon>
        <taxon>Chlamydiota</taxon>
        <taxon>Chlamydiia</taxon>
        <taxon>Chlamydiales</taxon>
        <taxon>Chlamydiaceae</taxon>
        <taxon>Chlamydia/Chlamydophila group</taxon>
        <taxon>Chlamydia</taxon>
    </lineage>
</organism>
<sequence>MIQQESQLKVADNTGAKRVKCFKVLGGSRRRYATVGDVIVCSVRDVEPDSSVKKGDVVKAVIVRTRRNILRKDGSSLKFDTNSCVIIDEKGNPKGTRIFGPIAREIRDRGFVKISSLAPEVI</sequence>
<comment type="function">
    <text evidence="1">Binds to 23S rRNA. Forms part of two intersubunit bridges in the 70S ribosome.</text>
</comment>
<comment type="subunit">
    <text evidence="1">Part of the 50S ribosomal subunit. Forms a cluster with proteins L3 and L19. In the 70S ribosome, L14 and L19 interact and together make contacts with the 16S rRNA in bridges B5 and B8.</text>
</comment>
<comment type="similarity">
    <text evidence="1">Belongs to the universal ribosomal protein uL14 family.</text>
</comment>
<reference key="1">
    <citation type="journal article" date="2005" name="Genome Res.">
        <title>The Chlamydophila abortus genome sequence reveals an array of variable proteins that contribute to interspecies variation.</title>
        <authorList>
            <person name="Thomson N.R."/>
            <person name="Yeats C."/>
            <person name="Bell K."/>
            <person name="Holden M.T.G."/>
            <person name="Bentley S.D."/>
            <person name="Livingstone M."/>
            <person name="Cerdeno-Tarraga A.-M."/>
            <person name="Harris B."/>
            <person name="Doggett J."/>
            <person name="Ormond D."/>
            <person name="Mungall K."/>
            <person name="Clarke K."/>
            <person name="Feltwell T."/>
            <person name="Hance Z."/>
            <person name="Sanders M."/>
            <person name="Quail M.A."/>
            <person name="Price C."/>
            <person name="Barrell B.G."/>
            <person name="Parkhill J."/>
            <person name="Longbottom D."/>
        </authorList>
    </citation>
    <scope>NUCLEOTIDE SEQUENCE [LARGE SCALE GENOMIC DNA]</scope>
    <source>
        <strain>DSM 27085 / S26/3</strain>
    </source>
</reference>
<feature type="chain" id="PRO_1000055549" description="Large ribosomal subunit protein uL14">
    <location>
        <begin position="1"/>
        <end position="122"/>
    </location>
</feature>
<name>RL14_CHLAB</name>
<keyword id="KW-0687">Ribonucleoprotein</keyword>
<keyword id="KW-0689">Ribosomal protein</keyword>
<keyword id="KW-0694">RNA-binding</keyword>
<keyword id="KW-0699">rRNA-binding</keyword>
<gene>
    <name evidence="1" type="primary">rplN</name>
    <name type="ordered locus">CAB102</name>
</gene>
<evidence type="ECO:0000255" key="1">
    <source>
        <dbReference type="HAMAP-Rule" id="MF_01367"/>
    </source>
</evidence>
<evidence type="ECO:0000305" key="2"/>
<dbReference type="EMBL" id="CR848038">
    <property type="protein sequence ID" value="CAH63560.1"/>
    <property type="molecule type" value="Genomic_DNA"/>
</dbReference>
<dbReference type="RefSeq" id="WP_006343773.1">
    <property type="nucleotide sequence ID" value="NC_004552.2"/>
</dbReference>
<dbReference type="SMR" id="Q5L710"/>
<dbReference type="GeneID" id="93024649"/>
<dbReference type="KEGG" id="cab:CAB102"/>
<dbReference type="eggNOG" id="COG0093">
    <property type="taxonomic scope" value="Bacteria"/>
</dbReference>
<dbReference type="HOGENOM" id="CLU_095071_2_1_0"/>
<dbReference type="OrthoDB" id="9806379at2"/>
<dbReference type="Proteomes" id="UP000001012">
    <property type="component" value="Chromosome"/>
</dbReference>
<dbReference type="GO" id="GO:0022625">
    <property type="term" value="C:cytosolic large ribosomal subunit"/>
    <property type="evidence" value="ECO:0007669"/>
    <property type="project" value="TreeGrafter"/>
</dbReference>
<dbReference type="GO" id="GO:0070180">
    <property type="term" value="F:large ribosomal subunit rRNA binding"/>
    <property type="evidence" value="ECO:0007669"/>
    <property type="project" value="TreeGrafter"/>
</dbReference>
<dbReference type="GO" id="GO:0003735">
    <property type="term" value="F:structural constituent of ribosome"/>
    <property type="evidence" value="ECO:0007669"/>
    <property type="project" value="InterPro"/>
</dbReference>
<dbReference type="GO" id="GO:0006412">
    <property type="term" value="P:translation"/>
    <property type="evidence" value="ECO:0007669"/>
    <property type="project" value="UniProtKB-UniRule"/>
</dbReference>
<dbReference type="CDD" id="cd00337">
    <property type="entry name" value="Ribosomal_uL14"/>
    <property type="match status" value="1"/>
</dbReference>
<dbReference type="FunFam" id="2.40.150.20:FF:000001">
    <property type="entry name" value="50S ribosomal protein L14"/>
    <property type="match status" value="1"/>
</dbReference>
<dbReference type="Gene3D" id="2.40.150.20">
    <property type="entry name" value="Ribosomal protein L14"/>
    <property type="match status" value="1"/>
</dbReference>
<dbReference type="HAMAP" id="MF_01367">
    <property type="entry name" value="Ribosomal_uL14"/>
    <property type="match status" value="1"/>
</dbReference>
<dbReference type="InterPro" id="IPR000218">
    <property type="entry name" value="Ribosomal_uL14"/>
</dbReference>
<dbReference type="InterPro" id="IPR005745">
    <property type="entry name" value="Ribosomal_uL14_bac-type"/>
</dbReference>
<dbReference type="InterPro" id="IPR019972">
    <property type="entry name" value="Ribosomal_uL14_CS"/>
</dbReference>
<dbReference type="InterPro" id="IPR036853">
    <property type="entry name" value="Ribosomal_uL14_sf"/>
</dbReference>
<dbReference type="NCBIfam" id="TIGR01067">
    <property type="entry name" value="rplN_bact"/>
    <property type="match status" value="1"/>
</dbReference>
<dbReference type="PANTHER" id="PTHR11761">
    <property type="entry name" value="50S/60S RIBOSOMAL PROTEIN L14/L23"/>
    <property type="match status" value="1"/>
</dbReference>
<dbReference type="PANTHER" id="PTHR11761:SF3">
    <property type="entry name" value="LARGE RIBOSOMAL SUBUNIT PROTEIN UL14M"/>
    <property type="match status" value="1"/>
</dbReference>
<dbReference type="Pfam" id="PF00238">
    <property type="entry name" value="Ribosomal_L14"/>
    <property type="match status" value="1"/>
</dbReference>
<dbReference type="SMART" id="SM01374">
    <property type="entry name" value="Ribosomal_L14"/>
    <property type="match status" value="1"/>
</dbReference>
<dbReference type="SUPFAM" id="SSF50193">
    <property type="entry name" value="Ribosomal protein L14"/>
    <property type="match status" value="1"/>
</dbReference>
<dbReference type="PROSITE" id="PS00049">
    <property type="entry name" value="RIBOSOMAL_L14"/>
    <property type="match status" value="1"/>
</dbReference>
<accession>Q5L710</accession>
<proteinExistence type="inferred from homology"/>